<organism>
    <name type="scientific">Mus musculus</name>
    <name type="common">Mouse</name>
    <dbReference type="NCBI Taxonomy" id="10090"/>
    <lineage>
        <taxon>Eukaryota</taxon>
        <taxon>Metazoa</taxon>
        <taxon>Chordata</taxon>
        <taxon>Craniata</taxon>
        <taxon>Vertebrata</taxon>
        <taxon>Euteleostomi</taxon>
        <taxon>Mammalia</taxon>
        <taxon>Eutheria</taxon>
        <taxon>Euarchontoglires</taxon>
        <taxon>Glires</taxon>
        <taxon>Rodentia</taxon>
        <taxon>Myomorpha</taxon>
        <taxon>Muroidea</taxon>
        <taxon>Muridae</taxon>
        <taxon>Murinae</taxon>
        <taxon>Mus</taxon>
        <taxon>Mus</taxon>
    </lineage>
</organism>
<protein>
    <recommendedName>
        <fullName>E3 ubiquitin-protein ligase RNF212B</fullName>
        <ecNumber evidence="3">2.3.2.27</ecNumber>
    </recommendedName>
    <alternativeName>
        <fullName>RING finger protein 212B</fullName>
    </alternativeName>
</protein>
<accession>D3Z423</accession>
<accession>D3Z2T6</accession>
<reference key="1">
    <citation type="journal article" date="2009" name="PLoS Biol.">
        <title>Lineage-specific biology revealed by a finished genome assembly of the mouse.</title>
        <authorList>
            <person name="Church D.M."/>
            <person name="Goodstadt L."/>
            <person name="Hillier L.W."/>
            <person name="Zody M.C."/>
            <person name="Goldstein S."/>
            <person name="She X."/>
            <person name="Bult C.J."/>
            <person name="Agarwala R."/>
            <person name="Cherry J.L."/>
            <person name="DiCuccio M."/>
            <person name="Hlavina W."/>
            <person name="Kapustin Y."/>
            <person name="Meric P."/>
            <person name="Maglott D."/>
            <person name="Birtle Z."/>
            <person name="Marques A.C."/>
            <person name="Graves T."/>
            <person name="Zhou S."/>
            <person name="Teague B."/>
            <person name="Potamousis K."/>
            <person name="Churas C."/>
            <person name="Place M."/>
            <person name="Herschleb J."/>
            <person name="Runnheim R."/>
            <person name="Forrest D."/>
            <person name="Amos-Landgraf J."/>
            <person name="Schwartz D.C."/>
            <person name="Cheng Z."/>
            <person name="Lindblad-Toh K."/>
            <person name="Eichler E.E."/>
            <person name="Ponting C.P."/>
        </authorList>
    </citation>
    <scope>NUCLEOTIDE SEQUENCE [LARGE SCALE GENOMIC DNA]</scope>
    <source>
        <strain>C57BL/6J</strain>
    </source>
</reference>
<reference key="2">
    <citation type="journal article" date="2024" name="Proc. Natl. Acad. Sci. U.S.A.">
        <title>RNF212B E3 ligase is essential for crossover designation and maturation during male and female meiosis in the mouse.</title>
        <authorList>
            <person name="Condezo Y.B."/>
            <person name="Sainz-Urruela R."/>
            <person name="Gomez-H L."/>
            <person name="Salas-Lloret D."/>
            <person name="Felipe-Medina N."/>
            <person name="Bradley R."/>
            <person name="Wolff I.D."/>
            <person name="Tanis S."/>
            <person name="Barbero J.L."/>
            <person name="Sanchez-Martin M."/>
            <person name="de Rooij D."/>
            <person name="Hendriks I.A."/>
            <person name="Nielsen M.L."/>
            <person name="Gonzalez-Prieto R."/>
            <person name="Cohen P.E."/>
            <person name="Pendas A.M."/>
            <person name="Llano E."/>
        </authorList>
    </citation>
    <scope>FUNCTION</scope>
    <scope>CATALYTIC ACTIVITY</scope>
    <scope>SUBCELLULAR LOCATION</scope>
    <scope>DISRUPTION PHENOTYPE</scope>
    <scope>MUTAGENESIS OF HIS-24</scope>
    <scope>AUTOUBIQUITINATION</scope>
    <scope>SUBUNIT</scope>
</reference>
<name>R212B_MOUSE</name>
<evidence type="ECO:0000255" key="1"/>
<evidence type="ECO:0000256" key="2">
    <source>
        <dbReference type="SAM" id="MobiDB-lite"/>
    </source>
</evidence>
<evidence type="ECO:0000269" key="3">
    <source>
    </source>
</evidence>
<keyword id="KW-0158">Chromosome</keyword>
<keyword id="KW-0175">Coiled coil</keyword>
<keyword id="KW-0469">Meiosis</keyword>
<keyword id="KW-0479">Metal-binding</keyword>
<keyword id="KW-1185">Reference proteome</keyword>
<keyword id="KW-0808">Transferase</keyword>
<keyword id="KW-0832">Ubl conjugation</keyword>
<keyword id="KW-0862">Zinc</keyword>
<keyword id="KW-0863">Zinc-finger</keyword>
<proteinExistence type="evidence at protein level"/>
<gene>
    <name type="primary">Rnf212b</name>
    <name type="synonym">Gm10332</name>
</gene>
<dbReference type="EC" id="2.3.2.27" evidence="3"/>
<dbReference type="EMBL" id="AC116591">
    <property type="status" value="NOT_ANNOTATED_CDS"/>
    <property type="molecule type" value="Genomic_DNA"/>
</dbReference>
<dbReference type="CCDS" id="CCDS88665.1"/>
<dbReference type="RefSeq" id="NP_001357828.1">
    <property type="nucleotide sequence ID" value="NM_001370899.1"/>
</dbReference>
<dbReference type="RefSeq" id="XP_006519928.1">
    <property type="nucleotide sequence ID" value="XM_006519865.3"/>
</dbReference>
<dbReference type="RefSeq" id="XP_011243591.1">
    <property type="nucleotide sequence ID" value="XM_011245289.3"/>
</dbReference>
<dbReference type="SMR" id="D3Z423"/>
<dbReference type="FunCoup" id="D3Z423">
    <property type="interactions" value="19"/>
</dbReference>
<dbReference type="STRING" id="10090.ENSMUSP00000151344"/>
<dbReference type="PhosphoSitePlus" id="D3Z423"/>
<dbReference type="ProteomicsDB" id="255061"/>
<dbReference type="Antibodypedia" id="64489">
    <property type="antibodies" value="6 antibodies from 6 providers"/>
</dbReference>
<dbReference type="Ensembl" id="ENSMUST00000218311.2">
    <property type="protein sequence ID" value="ENSMUSP00000151344.2"/>
    <property type="gene ID" value="ENSMUSG00000112858.3"/>
</dbReference>
<dbReference type="GeneID" id="102632837"/>
<dbReference type="AGR" id="MGI:5589964"/>
<dbReference type="CTD" id="100507650"/>
<dbReference type="MGI" id="MGI:5589964">
    <property type="gene designation" value="Rnf212b"/>
</dbReference>
<dbReference type="VEuPathDB" id="HostDB:ENSMUSG00000112858"/>
<dbReference type="GeneTree" id="ENSGT00740000115581"/>
<dbReference type="InParanoid" id="D3Z423"/>
<dbReference type="OMA" id="QVWRFQK"/>
<dbReference type="OrthoDB" id="2535391at2759"/>
<dbReference type="PhylomeDB" id="D3Z423"/>
<dbReference type="UniPathway" id="UPA00143"/>
<dbReference type="ChiTaRS" id="Rnf212b">
    <property type="organism name" value="mouse"/>
</dbReference>
<dbReference type="PRO" id="PR:D3Z423"/>
<dbReference type="Proteomes" id="UP000000589">
    <property type="component" value="Chromosome 14"/>
</dbReference>
<dbReference type="RNAct" id="D3Z423">
    <property type="molecule type" value="protein"/>
</dbReference>
<dbReference type="Bgee" id="ENSMUSG00000112858">
    <property type="expression patterns" value="Expressed in spermatid and 18 other cell types or tissues"/>
</dbReference>
<dbReference type="ExpressionAtlas" id="D3Z423">
    <property type="expression patterns" value="baseline and differential"/>
</dbReference>
<dbReference type="GO" id="GO:0000795">
    <property type="term" value="C:synaptonemal complex"/>
    <property type="evidence" value="ECO:0000314"/>
    <property type="project" value="UniProtKB"/>
</dbReference>
<dbReference type="GO" id="GO:0019789">
    <property type="term" value="F:SUMO transferase activity"/>
    <property type="evidence" value="ECO:0007669"/>
    <property type="project" value="InterPro"/>
</dbReference>
<dbReference type="GO" id="GO:0061630">
    <property type="term" value="F:ubiquitin protein ligase activity"/>
    <property type="evidence" value="ECO:0000314"/>
    <property type="project" value="UniProtKB"/>
</dbReference>
<dbReference type="GO" id="GO:0008270">
    <property type="term" value="F:zinc ion binding"/>
    <property type="evidence" value="ECO:0007669"/>
    <property type="project" value="UniProtKB-KW"/>
</dbReference>
<dbReference type="GO" id="GO:0051026">
    <property type="term" value="P:chiasma assembly"/>
    <property type="evidence" value="ECO:0000314"/>
    <property type="project" value="UniProtKB"/>
</dbReference>
<dbReference type="GO" id="GO:0007129">
    <property type="term" value="P:homologous chromosome pairing at meiosis"/>
    <property type="evidence" value="ECO:0000314"/>
    <property type="project" value="UniProtKB"/>
</dbReference>
<dbReference type="GO" id="GO:0016567">
    <property type="term" value="P:protein ubiquitination"/>
    <property type="evidence" value="ECO:0000314"/>
    <property type="project" value="UniProtKB"/>
</dbReference>
<dbReference type="CDD" id="cd16747">
    <property type="entry name" value="RING-HC_RNF212B"/>
    <property type="match status" value="1"/>
</dbReference>
<dbReference type="InterPro" id="IPR042123">
    <property type="entry name" value="Zip3/RNF212-like"/>
</dbReference>
<dbReference type="InterPro" id="IPR017907">
    <property type="entry name" value="Znf_RING_CS"/>
</dbReference>
<dbReference type="PANTHER" id="PTHR22663:SF29">
    <property type="entry name" value="RING FINGER PROTEIN 212B"/>
    <property type="match status" value="1"/>
</dbReference>
<dbReference type="PANTHER" id="PTHR22663">
    <property type="entry name" value="RING FINGER PROTEIN NARYA-RELATED"/>
    <property type="match status" value="1"/>
</dbReference>
<dbReference type="PROSITE" id="PS00518">
    <property type="entry name" value="ZF_RING_1"/>
    <property type="match status" value="1"/>
</dbReference>
<feature type="chain" id="PRO_0000395110" description="E3 ubiquitin-protein ligase RNF212B">
    <location>
        <begin position="1"/>
        <end position="297"/>
    </location>
</feature>
<feature type="zinc finger region" description="RING-type">
    <location>
        <begin position="6"/>
        <end position="40"/>
    </location>
</feature>
<feature type="region of interest" description="Disordered" evidence="2">
    <location>
        <begin position="152"/>
        <end position="179"/>
    </location>
</feature>
<feature type="region of interest" description="Disordered" evidence="2">
    <location>
        <begin position="198"/>
        <end position="269"/>
    </location>
</feature>
<feature type="coiled-coil region" evidence="1">
    <location>
        <begin position="87"/>
        <end position="136"/>
    </location>
</feature>
<feature type="compositionally biased region" description="Low complexity" evidence="2">
    <location>
        <begin position="163"/>
        <end position="179"/>
    </location>
</feature>
<feature type="compositionally biased region" description="Polar residues" evidence="2">
    <location>
        <begin position="206"/>
        <end position="234"/>
    </location>
</feature>
<feature type="mutagenesis site" description="Abolishes autoubiquitinylation. Spermatocytes recapitulated the phenotype observed in Rnf212b deficient mice, including modest synapsis defects, a reduction in the localization of pro-CO factors (MSH4, TEX11, SHOC1) and absence of late CO-intermediates." evidence="3">
    <original>H</original>
    <variation>A</variation>
    <location>
        <position position="24"/>
    </location>
</feature>
<sequence length="297" mass="32990">MDWFHCNQCFRKDGAHFFVTSCGHIFCKKCMTLEKCAVCGNLCKHLALSDNLKPQEKKFFKSPVETALQCFSHISQVWCFQKKQTDLLIAFYKDRITKLEAAVKEAQEMAASQNKELSALRKENGELKKILDILKGSPSCYYGSRLTTPRPVGITSPSQSVAPRPSSHHSSQVVSRSSSMESIPYTVAGMGHVEQGSRGLHVRSTPGDSYTETPSPASTHSLSYRPSSASSGQGVSFRPFFSGDSGHTRVLTPNNSGRRESRTTPESLPGFQLPVLQTFYQQRQMGLARKDGWNISR</sequence>
<comment type="function">
    <text evidence="3">Ubiquitin E3 ligase that acts as a crucial factor for crossing-over (CO) formation during meiosis. Essential for normal prophase I progression and for ensuring appropriate CO designation in meiosis. Recruits key components of the cross-over machinery either directly ou indirectly, leading to the activation of the MutL-gamma complex. The function of RNF212B in CO designation is dependent on its catalytic activity.</text>
</comment>
<comment type="catalytic activity">
    <reaction evidence="3">
        <text>S-ubiquitinyl-[E2 ubiquitin-conjugating enzyme]-L-cysteine + [acceptor protein]-L-lysine = [E2 ubiquitin-conjugating enzyme]-L-cysteine + N(6)-ubiquitinyl-[acceptor protein]-L-lysine.</text>
        <dbReference type="EC" id="2.3.2.27"/>
    </reaction>
</comment>
<comment type="pathway">
    <text evidence="3">Protein modification; protein ubiquitination.</text>
</comment>
<comment type="subunit">
    <text evidence="3">Homodimer.</text>
</comment>
<comment type="subcellular location">
    <subcellularLocation>
        <location evidence="3">Chromosome</location>
    </subcellularLocation>
    <text evidence="3">Colocalizes with RNF212.</text>
</comment>
<comment type="PTM">
    <text evidence="3">Autoubiquitinated.</text>
</comment>
<comment type="disruption phenotype">
    <text evidence="3">Homozygous mutant mice are apparently healthy. Both male and female are infertile and show synapsis defects specifically between the sex chromosomes. Most of the metaphase I/diakinesis from mutant spermatocytes display univalents with only a fraction forming chiasmata. Similarly, pachytene oocytes from Rnf212b-/- females lack MLH1 foci and metaphase I chromosomes have no chiasmata between homologous chromosome pairs. Mice lacking Rnf212b shown a reduction in the localization of pro-CO factors (MSH4, TEX11, MZIP2) and absence of late CO-intermediates (MLH1) in late zygonema and mid pachynema foci.</text>
</comment>